<feature type="chain" id="PRO_0000275565" description="Cytochrome b6-f complex subunit 8">
    <location>
        <begin position="1"/>
        <end position="29"/>
    </location>
</feature>
<feature type="transmembrane region" description="Helical" evidence="1">
    <location>
        <begin position="3"/>
        <end position="23"/>
    </location>
</feature>
<proteinExistence type="inferred from homology"/>
<evidence type="ECO:0000255" key="1">
    <source>
        <dbReference type="HAMAP-Rule" id="MF_00395"/>
    </source>
</evidence>
<reference key="1">
    <citation type="journal article" date="2006" name="Theor. Appl. Genet.">
        <title>Complete chloroplast genome sequences of Solanum bulbocastanum, Solanum lycopersicum and comparative analyses with other Solanaceae genomes.</title>
        <authorList>
            <person name="Daniell H."/>
            <person name="Lee S.-B."/>
            <person name="Grevich J."/>
            <person name="Saski C."/>
            <person name="Quesada-Vargas T."/>
            <person name="Guda C."/>
            <person name="Tomkins J."/>
            <person name="Jansen R.K."/>
        </authorList>
    </citation>
    <scope>NUCLEOTIDE SEQUENCE [LARGE SCALE GENOMIC DNA]</scope>
    <source>
        <strain>cv. LA3023</strain>
    </source>
</reference>
<reference key="2">
    <citation type="journal article" date="2006" name="J. Mol. Evol.">
        <title>Sequence of the tomato chloroplast DNA and evolutionary comparison of solanaceous plastid genomes.</title>
        <authorList>
            <person name="Kahlau S."/>
            <person name="Aspinall S."/>
            <person name="Gray J.C."/>
            <person name="Bock R."/>
        </authorList>
    </citation>
    <scope>NUCLEOTIDE SEQUENCE [LARGE SCALE GENOMIC DNA]</scope>
    <source>
        <strain>cv. IPA-6</strain>
    </source>
</reference>
<geneLocation type="chloroplast"/>
<protein>
    <recommendedName>
        <fullName evidence="1">Cytochrome b6-f complex subunit 8</fullName>
    </recommendedName>
    <alternativeName>
        <fullName evidence="1">Cytochrome b6-f complex subunit PetN</fullName>
    </alternativeName>
    <alternativeName>
        <fullName evidence="1">Cytochrome b6-f complex subunit VIII</fullName>
    </alternativeName>
</protein>
<dbReference type="EMBL" id="DQ347959">
    <property type="protein sequence ID" value="ABC56293.1"/>
    <property type="molecule type" value="Genomic_DNA"/>
</dbReference>
<dbReference type="EMBL" id="AM087200">
    <property type="protein sequence ID" value="CAJ32386.1"/>
    <property type="molecule type" value="Genomic_DNA"/>
</dbReference>
<dbReference type="RefSeq" id="AP_004921.1">
    <property type="nucleotide sequence ID" value="AC_000188.1"/>
</dbReference>
<dbReference type="RefSeq" id="YP_008563081.1">
    <property type="nucleotide sequence ID" value="NC_007898.3"/>
</dbReference>
<dbReference type="SMR" id="Q2MIA7"/>
<dbReference type="FunCoup" id="Q2MIA7">
    <property type="interactions" value="33"/>
</dbReference>
<dbReference type="STRING" id="4081.Q2MIA7"/>
<dbReference type="GeneID" id="3950487"/>
<dbReference type="KEGG" id="sly:3950487"/>
<dbReference type="InParanoid" id="Q2MIA7"/>
<dbReference type="Proteomes" id="UP000004994">
    <property type="component" value="Chloroplast"/>
</dbReference>
<dbReference type="GO" id="GO:0009535">
    <property type="term" value="C:chloroplast thylakoid membrane"/>
    <property type="evidence" value="ECO:0007669"/>
    <property type="project" value="UniProtKB-SubCell"/>
</dbReference>
<dbReference type="GO" id="GO:0009512">
    <property type="term" value="C:cytochrome b6f complex"/>
    <property type="evidence" value="ECO:0007669"/>
    <property type="project" value="InterPro"/>
</dbReference>
<dbReference type="GO" id="GO:0045158">
    <property type="term" value="F:electron transporter, transferring electrons within cytochrome b6/f complex of photosystem II activity"/>
    <property type="evidence" value="ECO:0007669"/>
    <property type="project" value="InterPro"/>
</dbReference>
<dbReference type="GO" id="GO:0017004">
    <property type="term" value="P:cytochrome complex assembly"/>
    <property type="evidence" value="ECO:0007669"/>
    <property type="project" value="UniProtKB-UniRule"/>
</dbReference>
<dbReference type="GO" id="GO:0015979">
    <property type="term" value="P:photosynthesis"/>
    <property type="evidence" value="ECO:0007669"/>
    <property type="project" value="UniProtKB-KW"/>
</dbReference>
<dbReference type="HAMAP" id="MF_00395">
    <property type="entry name" value="Cytb6_f_PetN"/>
    <property type="match status" value="1"/>
</dbReference>
<dbReference type="InterPro" id="IPR036143">
    <property type="entry name" value="Cytochr_b6-f_cplx_su8_sf"/>
</dbReference>
<dbReference type="InterPro" id="IPR005497">
    <property type="entry name" value="Cytochrome_b6-f_cplx_su8"/>
</dbReference>
<dbReference type="Pfam" id="PF03742">
    <property type="entry name" value="PetN"/>
    <property type="match status" value="1"/>
</dbReference>
<dbReference type="SUPFAM" id="SSF103451">
    <property type="entry name" value="PetN subunit of the cytochrome b6f complex"/>
    <property type="match status" value="1"/>
</dbReference>
<name>PETN_SOLLC</name>
<organism>
    <name type="scientific">Solanum lycopersicum</name>
    <name type="common">Tomato</name>
    <name type="synonym">Lycopersicon esculentum</name>
    <dbReference type="NCBI Taxonomy" id="4081"/>
    <lineage>
        <taxon>Eukaryota</taxon>
        <taxon>Viridiplantae</taxon>
        <taxon>Streptophyta</taxon>
        <taxon>Embryophyta</taxon>
        <taxon>Tracheophyta</taxon>
        <taxon>Spermatophyta</taxon>
        <taxon>Magnoliopsida</taxon>
        <taxon>eudicotyledons</taxon>
        <taxon>Gunneridae</taxon>
        <taxon>Pentapetalae</taxon>
        <taxon>asterids</taxon>
        <taxon>lamiids</taxon>
        <taxon>Solanales</taxon>
        <taxon>Solanaceae</taxon>
        <taxon>Solanoideae</taxon>
        <taxon>Solaneae</taxon>
        <taxon>Solanum</taxon>
        <taxon>Solanum subgen. Lycopersicon</taxon>
    </lineage>
</organism>
<accession>Q2MIA7</accession>
<sequence>MDIVSLAWAALMVVFTFSLSLVVWGRSGL</sequence>
<keyword id="KW-0150">Chloroplast</keyword>
<keyword id="KW-0249">Electron transport</keyword>
<keyword id="KW-0472">Membrane</keyword>
<keyword id="KW-0602">Photosynthesis</keyword>
<keyword id="KW-0934">Plastid</keyword>
<keyword id="KW-1185">Reference proteome</keyword>
<keyword id="KW-0793">Thylakoid</keyword>
<keyword id="KW-0812">Transmembrane</keyword>
<keyword id="KW-1133">Transmembrane helix</keyword>
<keyword id="KW-0813">Transport</keyword>
<gene>
    <name evidence="1" type="primary">petN</name>
</gene>
<comment type="function">
    <text evidence="1">Component of the cytochrome b6-f complex, which mediates electron transfer between photosystem II (PSII) and photosystem I (PSI), cyclic electron flow around PSI, and state transitions.</text>
</comment>
<comment type="subunit">
    <text evidence="1">The 4 large subunits of the cytochrome b6-f complex are cytochrome b6, subunit IV (17 kDa polypeptide, PetD), cytochrome f and the Rieske protein, while the 4 small subunits are PetG, PetL, PetM and PetN. The complex functions as a dimer.</text>
</comment>
<comment type="subcellular location">
    <subcellularLocation>
        <location>Plastid</location>
        <location>Chloroplast thylakoid membrane</location>
        <topology>Single-pass membrane protein</topology>
    </subcellularLocation>
</comment>
<comment type="similarity">
    <text evidence="1">Belongs to the PetN family.</text>
</comment>